<proteinExistence type="evidence at protein level"/>
<dbReference type="EMBL" id="L18983">
    <property type="protein sequence ID" value="AAA90974.1"/>
    <property type="molecule type" value="mRNA"/>
</dbReference>
<dbReference type="EMBL" id="AK296335">
    <property type="protein sequence ID" value="BAG59024.1"/>
    <property type="molecule type" value="mRNA"/>
</dbReference>
<dbReference type="EMBL" id="AC114803">
    <property type="protein sequence ID" value="AAY24038.1"/>
    <property type="molecule type" value="Genomic_DNA"/>
</dbReference>
<dbReference type="EMBL" id="CH471063">
    <property type="protein sequence ID" value="EAW70724.1"/>
    <property type="molecule type" value="Genomic_DNA"/>
</dbReference>
<dbReference type="EMBL" id="CH471063">
    <property type="protein sequence ID" value="EAW70726.1"/>
    <property type="molecule type" value="Genomic_DNA"/>
</dbReference>
<dbReference type="EMBL" id="BC070053">
    <property type="protein sequence ID" value="AAH70053.1"/>
    <property type="molecule type" value="mRNA"/>
</dbReference>
<dbReference type="EMBL" id="X62899">
    <property type="protein sequence ID" value="CAA44688.2"/>
    <property type="molecule type" value="mRNA"/>
</dbReference>
<dbReference type="CCDS" id="CCDS2440.1">
    <molecule id="Q16849-1"/>
</dbReference>
<dbReference type="CCDS" id="CCDS56167.1">
    <molecule id="Q16849-3"/>
</dbReference>
<dbReference type="CCDS" id="CCDS56168.1">
    <molecule id="Q16849-2"/>
</dbReference>
<dbReference type="PIR" id="I37577">
    <property type="entry name" value="I37577"/>
</dbReference>
<dbReference type="RefSeq" id="NP_001186692.1">
    <molecule id="Q16849-2"/>
    <property type="nucleotide sequence ID" value="NM_001199763.2"/>
</dbReference>
<dbReference type="RefSeq" id="NP_001186693.1">
    <molecule id="Q16849-3"/>
    <property type="nucleotide sequence ID" value="NM_001199764.2"/>
</dbReference>
<dbReference type="RefSeq" id="NP_002837.1">
    <molecule id="Q16849-1"/>
    <property type="nucleotide sequence ID" value="NM_002846.4"/>
</dbReference>
<dbReference type="PDB" id="2I1Y">
    <property type="method" value="X-ray"/>
    <property type="resolution" value="2.23 A"/>
    <property type="chains" value="A/B=681-979"/>
</dbReference>
<dbReference type="PDB" id="2QT7">
    <property type="method" value="X-ray"/>
    <property type="resolution" value="1.30 A"/>
    <property type="chains" value="A/B=468-558"/>
</dbReference>
<dbReference type="PDB" id="3N01">
    <property type="method" value="X-ray"/>
    <property type="resolution" value="1.30 A"/>
    <property type="chains" value="A/B=470-558"/>
</dbReference>
<dbReference type="PDB" id="3N4W">
    <property type="method" value="X-ray"/>
    <property type="resolution" value="1.45 A"/>
    <property type="chains" value="A/B=470-558"/>
</dbReference>
<dbReference type="PDB" id="3NG8">
    <property type="method" value="X-ray"/>
    <property type="resolution" value="1.35 A"/>
    <property type="chains" value="A/B=470-558"/>
</dbReference>
<dbReference type="PDB" id="3NP5">
    <property type="method" value="X-ray"/>
    <property type="resolution" value="1.80 A"/>
    <property type="chains" value="A/B/C/D=470-558"/>
</dbReference>
<dbReference type="PDBsum" id="2I1Y"/>
<dbReference type="PDBsum" id="2QT7"/>
<dbReference type="PDBsum" id="3N01"/>
<dbReference type="PDBsum" id="3N4W"/>
<dbReference type="PDBsum" id="3NG8"/>
<dbReference type="PDBsum" id="3NP5"/>
<dbReference type="SMR" id="Q16849"/>
<dbReference type="BioGRID" id="111762">
    <property type="interactions" value="123"/>
</dbReference>
<dbReference type="FunCoup" id="Q16849">
    <property type="interactions" value="527"/>
</dbReference>
<dbReference type="IntAct" id="Q16849">
    <property type="interactions" value="52"/>
</dbReference>
<dbReference type="MINT" id="Q16849"/>
<dbReference type="STRING" id="9606.ENSP00000295718"/>
<dbReference type="DEPOD" id="PTPRN"/>
<dbReference type="GlyConnect" id="697">
    <property type="glycosylation" value="1 O-Linked glycan (1 site)"/>
</dbReference>
<dbReference type="GlyCosmos" id="Q16849">
    <property type="glycosylation" value="3 sites, 2 glycans"/>
</dbReference>
<dbReference type="GlyGen" id="Q16849">
    <property type="glycosylation" value="7 sites, 8 N-linked glycans (1 site), 3 O-linked glycans (4 sites)"/>
</dbReference>
<dbReference type="iPTMnet" id="Q16849"/>
<dbReference type="PhosphoSitePlus" id="Q16849"/>
<dbReference type="BioMuta" id="PTPRN"/>
<dbReference type="DMDM" id="2499754"/>
<dbReference type="jPOST" id="Q16849"/>
<dbReference type="MassIVE" id="Q16849"/>
<dbReference type="PaxDb" id="9606-ENSP00000295718"/>
<dbReference type="PeptideAtlas" id="Q16849"/>
<dbReference type="ProteomicsDB" id="25116"/>
<dbReference type="ProteomicsDB" id="61099">
    <molecule id="Q16849-1"/>
</dbReference>
<dbReference type="ProteomicsDB" id="61100">
    <molecule id="Q16849-2"/>
</dbReference>
<dbReference type="Antibodypedia" id="1516">
    <property type="antibodies" value="308 antibodies from 32 providers"/>
</dbReference>
<dbReference type="DNASU" id="5798"/>
<dbReference type="Ensembl" id="ENST00000295718.7">
    <molecule id="Q16849-1"/>
    <property type="protein sequence ID" value="ENSP00000295718.2"/>
    <property type="gene ID" value="ENSG00000054356.14"/>
</dbReference>
<dbReference type="Ensembl" id="ENST00000409251.7">
    <molecule id="Q16849-2"/>
    <property type="protein sequence ID" value="ENSP00000386638.3"/>
    <property type="gene ID" value="ENSG00000054356.14"/>
</dbReference>
<dbReference type="Ensembl" id="ENST00000423636.6">
    <molecule id="Q16849-3"/>
    <property type="protein sequence ID" value="ENSP00000392598.2"/>
    <property type="gene ID" value="ENSG00000054356.14"/>
</dbReference>
<dbReference type="GeneID" id="5798"/>
<dbReference type="KEGG" id="hsa:5798"/>
<dbReference type="MANE-Select" id="ENST00000295718.7">
    <property type="protein sequence ID" value="ENSP00000295718.2"/>
    <property type="RefSeq nucleotide sequence ID" value="NM_002846.4"/>
    <property type="RefSeq protein sequence ID" value="NP_002837.1"/>
</dbReference>
<dbReference type="UCSC" id="uc002vkz.3">
    <molecule id="Q16849-1"/>
    <property type="organism name" value="human"/>
</dbReference>
<dbReference type="AGR" id="HGNC:9676"/>
<dbReference type="CTD" id="5798"/>
<dbReference type="DisGeNET" id="5798"/>
<dbReference type="GeneCards" id="PTPRN"/>
<dbReference type="HGNC" id="HGNC:9676">
    <property type="gene designation" value="PTPRN"/>
</dbReference>
<dbReference type="HPA" id="ENSG00000054356">
    <property type="expression patterns" value="Group enriched (brain, pituitary gland)"/>
</dbReference>
<dbReference type="MIM" id="601773">
    <property type="type" value="gene"/>
</dbReference>
<dbReference type="neXtProt" id="NX_Q16849"/>
<dbReference type="OpenTargets" id="ENSG00000054356"/>
<dbReference type="PharmGKB" id="PA34021"/>
<dbReference type="VEuPathDB" id="HostDB:ENSG00000054356"/>
<dbReference type="eggNOG" id="KOG0793">
    <property type="taxonomic scope" value="Eukaryota"/>
</dbReference>
<dbReference type="GeneTree" id="ENSGT00940000154095"/>
<dbReference type="HOGENOM" id="CLU_007905_2_0_1"/>
<dbReference type="InParanoid" id="Q16849"/>
<dbReference type="OMA" id="AQTGFQI"/>
<dbReference type="OrthoDB" id="9880441at2759"/>
<dbReference type="PAN-GO" id="Q16849">
    <property type="GO annotations" value="4 GO annotations based on evolutionary models"/>
</dbReference>
<dbReference type="PhylomeDB" id="Q16849"/>
<dbReference type="TreeFam" id="TF351976"/>
<dbReference type="BRENDA" id="3.1.3.48">
    <property type="organism ID" value="2681"/>
</dbReference>
<dbReference type="PathwayCommons" id="Q16849"/>
<dbReference type="SignaLink" id="Q16849"/>
<dbReference type="BioGRID-ORCS" id="5798">
    <property type="hits" value="11 hits in 1158 CRISPR screens"/>
</dbReference>
<dbReference type="ChiTaRS" id="PTPRN">
    <property type="organism name" value="human"/>
</dbReference>
<dbReference type="EvolutionaryTrace" id="Q16849"/>
<dbReference type="GeneWiki" id="PTPRN"/>
<dbReference type="GenomeRNAi" id="5798"/>
<dbReference type="Pharos" id="Q16849">
    <property type="development level" value="Tbio"/>
</dbReference>
<dbReference type="PRO" id="PR:Q16849"/>
<dbReference type="Proteomes" id="UP000005640">
    <property type="component" value="Chromosome 2"/>
</dbReference>
<dbReference type="RNAct" id="Q16849">
    <property type="molecule type" value="protein"/>
</dbReference>
<dbReference type="Bgee" id="ENSG00000054356">
    <property type="expression patterns" value="Expressed in islet of Langerhans and 140 other cell types or tissues"/>
</dbReference>
<dbReference type="ExpressionAtlas" id="Q16849">
    <property type="expression patterns" value="baseline and differential"/>
</dbReference>
<dbReference type="GO" id="GO:0043679">
    <property type="term" value="C:axon terminus"/>
    <property type="evidence" value="ECO:0000250"/>
    <property type="project" value="UniProtKB"/>
</dbReference>
<dbReference type="GO" id="GO:0005768">
    <property type="term" value="C:endosome"/>
    <property type="evidence" value="ECO:0000250"/>
    <property type="project" value="UniProtKB"/>
</dbReference>
<dbReference type="GO" id="GO:0005794">
    <property type="term" value="C:Golgi apparatus"/>
    <property type="evidence" value="ECO:0000250"/>
    <property type="project" value="UniProtKB"/>
</dbReference>
<dbReference type="GO" id="GO:0043025">
    <property type="term" value="C:neuronal cell body"/>
    <property type="evidence" value="ECO:0000250"/>
    <property type="project" value="UniProtKB"/>
</dbReference>
<dbReference type="GO" id="GO:0005634">
    <property type="term" value="C:nucleus"/>
    <property type="evidence" value="ECO:0000314"/>
    <property type="project" value="UniProtKB"/>
</dbReference>
<dbReference type="GO" id="GO:0043204">
    <property type="term" value="C:perikaryon"/>
    <property type="evidence" value="ECO:0007669"/>
    <property type="project" value="UniProtKB-SubCell"/>
</dbReference>
<dbReference type="GO" id="GO:0005886">
    <property type="term" value="C:plasma membrane"/>
    <property type="evidence" value="ECO:0000250"/>
    <property type="project" value="UniProtKB"/>
</dbReference>
<dbReference type="GO" id="GO:0030141">
    <property type="term" value="C:secretory granule"/>
    <property type="evidence" value="ECO:0000250"/>
    <property type="project" value="UniProtKB"/>
</dbReference>
<dbReference type="GO" id="GO:0045202">
    <property type="term" value="C:synapse"/>
    <property type="evidence" value="ECO:0000250"/>
    <property type="project" value="UniProtKB"/>
</dbReference>
<dbReference type="GO" id="GO:0030658">
    <property type="term" value="C:transport vesicle membrane"/>
    <property type="evidence" value="ECO:0007669"/>
    <property type="project" value="UniProtKB-SubCell"/>
</dbReference>
<dbReference type="GO" id="GO:0030507">
    <property type="term" value="F:spectrin binding"/>
    <property type="evidence" value="ECO:0000353"/>
    <property type="project" value="BHF-UCL"/>
</dbReference>
<dbReference type="GO" id="GO:0008134">
    <property type="term" value="F:transcription factor binding"/>
    <property type="evidence" value="ECO:0000314"/>
    <property type="project" value="UniProtKB"/>
</dbReference>
<dbReference type="GO" id="GO:0044389">
    <property type="term" value="F:ubiquitin-like protein ligase binding"/>
    <property type="evidence" value="ECO:0000314"/>
    <property type="project" value="UniProtKB"/>
</dbReference>
<dbReference type="GO" id="GO:1990502">
    <property type="term" value="P:dense core granule maturation"/>
    <property type="evidence" value="ECO:0000316"/>
    <property type="project" value="GO_Central"/>
</dbReference>
<dbReference type="GO" id="GO:0030073">
    <property type="term" value="P:insulin secretion"/>
    <property type="evidence" value="ECO:0000316"/>
    <property type="project" value="GO_Central"/>
</dbReference>
<dbReference type="GO" id="GO:0035773">
    <property type="term" value="P:insulin secretion involved in cellular response to glucose stimulus"/>
    <property type="evidence" value="ECO:0000250"/>
    <property type="project" value="UniProtKB"/>
</dbReference>
<dbReference type="GO" id="GO:0001553">
    <property type="term" value="P:luteinization"/>
    <property type="evidence" value="ECO:0000250"/>
    <property type="project" value="UniProtKB"/>
</dbReference>
<dbReference type="GO" id="GO:0045944">
    <property type="term" value="P:positive regulation of transcription by RNA polymerase II"/>
    <property type="evidence" value="ECO:0000314"/>
    <property type="project" value="UniProtKB"/>
</dbReference>
<dbReference type="GO" id="GO:1904692">
    <property type="term" value="P:positive regulation of type B pancreatic cell proliferation"/>
    <property type="evidence" value="ECO:0000314"/>
    <property type="project" value="UniProtKB"/>
</dbReference>
<dbReference type="GO" id="GO:0051046">
    <property type="term" value="P:regulation of secretion"/>
    <property type="evidence" value="ECO:0000318"/>
    <property type="project" value="GO_Central"/>
</dbReference>
<dbReference type="GO" id="GO:0000302">
    <property type="term" value="P:response to reactive oxygen species"/>
    <property type="evidence" value="ECO:0000314"/>
    <property type="project" value="UniProtKB"/>
</dbReference>
<dbReference type="CDD" id="cd14609">
    <property type="entry name" value="R-PTP-N"/>
    <property type="match status" value="1"/>
</dbReference>
<dbReference type="FunFam" id="3.30.70.2470:FF:000001">
    <property type="entry name" value="receptor-type tyrosine-protein phosphatase-like N isoform X1"/>
    <property type="match status" value="1"/>
</dbReference>
<dbReference type="FunFam" id="3.90.190.10:FF:000017">
    <property type="entry name" value="receptor-type tyrosine-protein phosphatase-like N isoform X2"/>
    <property type="match status" value="1"/>
</dbReference>
<dbReference type="Gene3D" id="3.90.190.10">
    <property type="entry name" value="Protein tyrosine phosphatase superfamily"/>
    <property type="match status" value="1"/>
</dbReference>
<dbReference type="Gene3D" id="3.30.70.2470">
    <property type="entry name" value="Protein-tyrosine phosphatase receptor IA-2 ectodomain"/>
    <property type="match status" value="1"/>
</dbReference>
<dbReference type="InterPro" id="IPR033522">
    <property type="entry name" value="IA-2/IA-2_beta"/>
</dbReference>
<dbReference type="InterPro" id="IPR029021">
    <property type="entry name" value="Prot-tyrosine_phosphatase-like"/>
</dbReference>
<dbReference type="InterPro" id="IPR000242">
    <property type="entry name" value="PTP_cat"/>
</dbReference>
<dbReference type="InterPro" id="IPR021613">
    <property type="entry name" value="Receptor_IA-2_dom"/>
</dbReference>
<dbReference type="InterPro" id="IPR038112">
    <property type="entry name" value="Receptor_IA-2_ectodomain_sf"/>
</dbReference>
<dbReference type="InterPro" id="IPR029403">
    <property type="entry name" value="RESP18_dom"/>
</dbReference>
<dbReference type="InterPro" id="IPR016130">
    <property type="entry name" value="Tyr_Pase_AS"/>
</dbReference>
<dbReference type="InterPro" id="IPR003595">
    <property type="entry name" value="Tyr_Pase_cat"/>
</dbReference>
<dbReference type="InterPro" id="IPR000387">
    <property type="entry name" value="Tyr_Pase_dom"/>
</dbReference>
<dbReference type="PANTHER" id="PTHR46106">
    <property type="entry name" value="IA-2 PROTEIN TYROSINE PHOSPHATASE, ISOFORM C"/>
    <property type="match status" value="1"/>
</dbReference>
<dbReference type="PANTHER" id="PTHR46106:SF1">
    <property type="entry name" value="RECEPTOR-TYPE TYROSINE-PROTEIN PHOSPHATASE-LIKE N"/>
    <property type="match status" value="1"/>
</dbReference>
<dbReference type="Pfam" id="PF11548">
    <property type="entry name" value="Receptor_IA-2"/>
    <property type="match status" value="1"/>
</dbReference>
<dbReference type="Pfam" id="PF14948">
    <property type="entry name" value="RESP18"/>
    <property type="match status" value="1"/>
</dbReference>
<dbReference type="Pfam" id="PF00102">
    <property type="entry name" value="Y_phosphatase"/>
    <property type="match status" value="1"/>
</dbReference>
<dbReference type="PRINTS" id="PR00700">
    <property type="entry name" value="PRTYPHPHTASE"/>
</dbReference>
<dbReference type="SMART" id="SM00194">
    <property type="entry name" value="PTPc"/>
    <property type="match status" value="1"/>
</dbReference>
<dbReference type="SMART" id="SM00404">
    <property type="entry name" value="PTPc_motif"/>
    <property type="match status" value="1"/>
</dbReference>
<dbReference type="SMART" id="SM01305">
    <property type="entry name" value="RESP18"/>
    <property type="match status" value="1"/>
</dbReference>
<dbReference type="SUPFAM" id="SSF52799">
    <property type="entry name" value="(Phosphotyrosine protein) phosphatases II"/>
    <property type="match status" value="1"/>
</dbReference>
<dbReference type="PROSITE" id="PS00383">
    <property type="entry name" value="TYR_PHOSPHATASE_1"/>
    <property type="match status" value="1"/>
</dbReference>
<dbReference type="PROSITE" id="PS50056">
    <property type="entry name" value="TYR_PHOSPHATASE_2"/>
    <property type="match status" value="1"/>
</dbReference>
<dbReference type="PROSITE" id="PS50055">
    <property type="entry name" value="TYR_PHOSPHATASE_PTP"/>
    <property type="match status" value="1"/>
</dbReference>
<organism>
    <name type="scientific">Homo sapiens</name>
    <name type="common">Human</name>
    <dbReference type="NCBI Taxonomy" id="9606"/>
    <lineage>
        <taxon>Eukaryota</taxon>
        <taxon>Metazoa</taxon>
        <taxon>Chordata</taxon>
        <taxon>Craniata</taxon>
        <taxon>Vertebrata</taxon>
        <taxon>Euteleostomi</taxon>
        <taxon>Mammalia</taxon>
        <taxon>Eutheria</taxon>
        <taxon>Euarchontoglires</taxon>
        <taxon>Primates</taxon>
        <taxon>Haplorrhini</taxon>
        <taxon>Catarrhini</taxon>
        <taxon>Hominidae</taxon>
        <taxon>Homo</taxon>
    </lineage>
</organism>
<gene>
    <name type="primary">PTPRN</name>
    <name type="synonym">ICA3</name>
    <name type="synonym">ICA512</name>
</gene>
<keyword id="KW-0002">3D-structure</keyword>
<keyword id="KW-0025">Alternative splicing</keyword>
<keyword id="KW-1003">Cell membrane</keyword>
<keyword id="KW-0966">Cell projection</keyword>
<keyword id="KW-0968">Cytoplasmic vesicle</keyword>
<keyword id="KW-0219">Diabetes mellitus</keyword>
<keyword id="KW-0903">Direct protein sequencing</keyword>
<keyword id="KW-1015">Disulfide bond</keyword>
<keyword id="KW-0967">Endosome</keyword>
<keyword id="KW-0325">Glycoprotein</keyword>
<keyword id="KW-1017">Isopeptide bond</keyword>
<keyword id="KW-0472">Membrane</keyword>
<keyword id="KW-0539">Nucleus</keyword>
<keyword id="KW-0597">Phosphoprotein</keyword>
<keyword id="KW-1267">Proteomics identification</keyword>
<keyword id="KW-0675">Receptor</keyword>
<keyword id="KW-1185">Reference proteome</keyword>
<keyword id="KW-0732">Signal</keyword>
<keyword id="KW-0770">Synapse</keyword>
<keyword id="KW-0804">Transcription</keyword>
<keyword id="KW-0805">Transcription regulation</keyword>
<keyword id="KW-0812">Transmembrane</keyword>
<keyword id="KW-1133">Transmembrane helix</keyword>
<keyword id="KW-0832">Ubl conjugation</keyword>
<reference key="1">
    <citation type="journal article" date="1994" name="DNA Cell Biol.">
        <title>Molecular cloning and identification of a receptor-type protein tyrosine phosphatase, IA-2, from human insulinoma.</title>
        <authorList>
            <person name="Lan M.S."/>
            <person name="Lu J."/>
            <person name="Goto Y."/>
            <person name="Notkins A.L."/>
        </authorList>
    </citation>
    <scope>NUCLEOTIDE SEQUENCE [MRNA] (ISOFORM 1)</scope>
    <scope>TISSUE SPECIFICITY</scope>
    <source>
        <tissue>Insulinoma</tissue>
    </source>
</reference>
<reference key="2">
    <citation type="journal article" date="2004" name="Nat. Genet.">
        <title>Complete sequencing and characterization of 21,243 full-length human cDNAs.</title>
        <authorList>
            <person name="Ota T."/>
            <person name="Suzuki Y."/>
            <person name="Nishikawa T."/>
            <person name="Otsuki T."/>
            <person name="Sugiyama T."/>
            <person name="Irie R."/>
            <person name="Wakamatsu A."/>
            <person name="Hayashi K."/>
            <person name="Sato H."/>
            <person name="Nagai K."/>
            <person name="Kimura K."/>
            <person name="Makita H."/>
            <person name="Sekine M."/>
            <person name="Obayashi M."/>
            <person name="Nishi T."/>
            <person name="Shibahara T."/>
            <person name="Tanaka T."/>
            <person name="Ishii S."/>
            <person name="Yamamoto J."/>
            <person name="Saito K."/>
            <person name="Kawai Y."/>
            <person name="Isono Y."/>
            <person name="Nakamura Y."/>
            <person name="Nagahari K."/>
            <person name="Murakami K."/>
            <person name="Yasuda T."/>
            <person name="Iwayanagi T."/>
            <person name="Wagatsuma M."/>
            <person name="Shiratori A."/>
            <person name="Sudo H."/>
            <person name="Hosoiri T."/>
            <person name="Kaku Y."/>
            <person name="Kodaira H."/>
            <person name="Kondo H."/>
            <person name="Sugawara M."/>
            <person name="Takahashi M."/>
            <person name="Kanda K."/>
            <person name="Yokoi T."/>
            <person name="Furuya T."/>
            <person name="Kikkawa E."/>
            <person name="Omura Y."/>
            <person name="Abe K."/>
            <person name="Kamihara K."/>
            <person name="Katsuta N."/>
            <person name="Sato K."/>
            <person name="Tanikawa M."/>
            <person name="Yamazaki M."/>
            <person name="Ninomiya K."/>
            <person name="Ishibashi T."/>
            <person name="Yamashita H."/>
            <person name="Murakawa K."/>
            <person name="Fujimori K."/>
            <person name="Tanai H."/>
            <person name="Kimata M."/>
            <person name="Watanabe M."/>
            <person name="Hiraoka S."/>
            <person name="Chiba Y."/>
            <person name="Ishida S."/>
            <person name="Ono Y."/>
            <person name="Takiguchi S."/>
            <person name="Watanabe S."/>
            <person name="Yosida M."/>
            <person name="Hotuta T."/>
            <person name="Kusano J."/>
            <person name="Kanehori K."/>
            <person name="Takahashi-Fujii A."/>
            <person name="Hara H."/>
            <person name="Tanase T.-O."/>
            <person name="Nomura Y."/>
            <person name="Togiya S."/>
            <person name="Komai F."/>
            <person name="Hara R."/>
            <person name="Takeuchi K."/>
            <person name="Arita M."/>
            <person name="Imose N."/>
            <person name="Musashino K."/>
            <person name="Yuuki H."/>
            <person name="Oshima A."/>
            <person name="Sasaki N."/>
            <person name="Aotsuka S."/>
            <person name="Yoshikawa Y."/>
            <person name="Matsunawa H."/>
            <person name="Ichihara T."/>
            <person name="Shiohata N."/>
            <person name="Sano S."/>
            <person name="Moriya S."/>
            <person name="Momiyama H."/>
            <person name="Satoh N."/>
            <person name="Takami S."/>
            <person name="Terashima Y."/>
            <person name="Suzuki O."/>
            <person name="Nakagawa S."/>
            <person name="Senoh A."/>
            <person name="Mizoguchi H."/>
            <person name="Goto Y."/>
            <person name="Shimizu F."/>
            <person name="Wakebe H."/>
            <person name="Hishigaki H."/>
            <person name="Watanabe T."/>
            <person name="Sugiyama A."/>
            <person name="Takemoto M."/>
            <person name="Kawakami B."/>
            <person name="Yamazaki M."/>
            <person name="Watanabe K."/>
            <person name="Kumagai A."/>
            <person name="Itakura S."/>
            <person name="Fukuzumi Y."/>
            <person name="Fujimori Y."/>
            <person name="Komiyama M."/>
            <person name="Tashiro H."/>
            <person name="Tanigami A."/>
            <person name="Fujiwara T."/>
            <person name="Ono T."/>
            <person name="Yamada K."/>
            <person name="Fujii Y."/>
            <person name="Ozaki K."/>
            <person name="Hirao M."/>
            <person name="Ohmori Y."/>
            <person name="Kawabata A."/>
            <person name="Hikiji T."/>
            <person name="Kobatake N."/>
            <person name="Inagaki H."/>
            <person name="Ikema Y."/>
            <person name="Okamoto S."/>
            <person name="Okitani R."/>
            <person name="Kawakami T."/>
            <person name="Noguchi S."/>
            <person name="Itoh T."/>
            <person name="Shigeta K."/>
            <person name="Senba T."/>
            <person name="Matsumura K."/>
            <person name="Nakajima Y."/>
            <person name="Mizuno T."/>
            <person name="Morinaga M."/>
            <person name="Sasaki M."/>
            <person name="Togashi T."/>
            <person name="Oyama M."/>
            <person name="Hata H."/>
            <person name="Watanabe M."/>
            <person name="Komatsu T."/>
            <person name="Mizushima-Sugano J."/>
            <person name="Satoh T."/>
            <person name="Shirai Y."/>
            <person name="Takahashi Y."/>
            <person name="Nakagawa K."/>
            <person name="Okumura K."/>
            <person name="Nagase T."/>
            <person name="Nomura N."/>
            <person name="Kikuchi H."/>
            <person name="Masuho Y."/>
            <person name="Yamashita R."/>
            <person name="Nakai K."/>
            <person name="Yada T."/>
            <person name="Nakamura Y."/>
            <person name="Ohara O."/>
            <person name="Isogai T."/>
            <person name="Sugano S."/>
        </authorList>
    </citation>
    <scope>NUCLEOTIDE SEQUENCE [LARGE SCALE MRNA] (ISOFORM 3)</scope>
    <source>
        <tissue>Thalamus</tissue>
    </source>
</reference>
<reference key="3">
    <citation type="journal article" date="2005" name="Nature">
        <title>Generation and annotation of the DNA sequences of human chromosomes 2 and 4.</title>
        <authorList>
            <person name="Hillier L.W."/>
            <person name="Graves T.A."/>
            <person name="Fulton R.S."/>
            <person name="Fulton L.A."/>
            <person name="Pepin K.H."/>
            <person name="Minx P."/>
            <person name="Wagner-McPherson C."/>
            <person name="Layman D."/>
            <person name="Wylie K."/>
            <person name="Sekhon M."/>
            <person name="Becker M.C."/>
            <person name="Fewell G.A."/>
            <person name="Delehaunty K.D."/>
            <person name="Miner T.L."/>
            <person name="Nash W.E."/>
            <person name="Kremitzki C."/>
            <person name="Oddy L."/>
            <person name="Du H."/>
            <person name="Sun H."/>
            <person name="Bradshaw-Cordum H."/>
            <person name="Ali J."/>
            <person name="Carter J."/>
            <person name="Cordes M."/>
            <person name="Harris A."/>
            <person name="Isak A."/>
            <person name="van Brunt A."/>
            <person name="Nguyen C."/>
            <person name="Du F."/>
            <person name="Courtney L."/>
            <person name="Kalicki J."/>
            <person name="Ozersky P."/>
            <person name="Abbott S."/>
            <person name="Armstrong J."/>
            <person name="Belter E.A."/>
            <person name="Caruso L."/>
            <person name="Cedroni M."/>
            <person name="Cotton M."/>
            <person name="Davidson T."/>
            <person name="Desai A."/>
            <person name="Elliott G."/>
            <person name="Erb T."/>
            <person name="Fronick C."/>
            <person name="Gaige T."/>
            <person name="Haakenson W."/>
            <person name="Haglund K."/>
            <person name="Holmes A."/>
            <person name="Harkins R."/>
            <person name="Kim K."/>
            <person name="Kruchowski S.S."/>
            <person name="Strong C.M."/>
            <person name="Grewal N."/>
            <person name="Goyea E."/>
            <person name="Hou S."/>
            <person name="Levy A."/>
            <person name="Martinka S."/>
            <person name="Mead K."/>
            <person name="McLellan M.D."/>
            <person name="Meyer R."/>
            <person name="Randall-Maher J."/>
            <person name="Tomlinson C."/>
            <person name="Dauphin-Kohlberg S."/>
            <person name="Kozlowicz-Reilly A."/>
            <person name="Shah N."/>
            <person name="Swearengen-Shahid S."/>
            <person name="Snider J."/>
            <person name="Strong J.T."/>
            <person name="Thompson J."/>
            <person name="Yoakum M."/>
            <person name="Leonard S."/>
            <person name="Pearman C."/>
            <person name="Trani L."/>
            <person name="Radionenko M."/>
            <person name="Waligorski J.E."/>
            <person name="Wang C."/>
            <person name="Rock S.M."/>
            <person name="Tin-Wollam A.-M."/>
            <person name="Maupin R."/>
            <person name="Latreille P."/>
            <person name="Wendl M.C."/>
            <person name="Yang S.-P."/>
            <person name="Pohl C."/>
            <person name="Wallis J.W."/>
            <person name="Spieth J."/>
            <person name="Bieri T.A."/>
            <person name="Berkowicz N."/>
            <person name="Nelson J.O."/>
            <person name="Osborne J."/>
            <person name="Ding L."/>
            <person name="Meyer R."/>
            <person name="Sabo A."/>
            <person name="Shotland Y."/>
            <person name="Sinha P."/>
            <person name="Wohldmann P.E."/>
            <person name="Cook L.L."/>
            <person name="Hickenbotham M.T."/>
            <person name="Eldred J."/>
            <person name="Williams D."/>
            <person name="Jones T.A."/>
            <person name="She X."/>
            <person name="Ciccarelli F.D."/>
            <person name="Izaurralde E."/>
            <person name="Taylor J."/>
            <person name="Schmutz J."/>
            <person name="Myers R.M."/>
            <person name="Cox D.R."/>
            <person name="Huang X."/>
            <person name="McPherson J.D."/>
            <person name="Mardis E.R."/>
            <person name="Clifton S.W."/>
            <person name="Warren W.C."/>
            <person name="Chinwalla A.T."/>
            <person name="Eddy S.R."/>
            <person name="Marra M.A."/>
            <person name="Ovcharenko I."/>
            <person name="Furey T.S."/>
            <person name="Miller W."/>
            <person name="Eichler E.E."/>
            <person name="Bork P."/>
            <person name="Suyama M."/>
            <person name="Torrents D."/>
            <person name="Waterston R.H."/>
            <person name="Wilson R.K."/>
        </authorList>
    </citation>
    <scope>NUCLEOTIDE SEQUENCE [LARGE SCALE GENOMIC DNA]</scope>
</reference>
<reference key="4">
    <citation type="submission" date="2005-07" db="EMBL/GenBank/DDBJ databases">
        <authorList>
            <person name="Mural R.J."/>
            <person name="Istrail S."/>
            <person name="Sutton G.G."/>
            <person name="Florea L."/>
            <person name="Halpern A.L."/>
            <person name="Mobarry C.M."/>
            <person name="Lippert R."/>
            <person name="Walenz B."/>
            <person name="Shatkay H."/>
            <person name="Dew I."/>
            <person name="Miller J.R."/>
            <person name="Flanigan M.J."/>
            <person name="Edwards N.J."/>
            <person name="Bolanos R."/>
            <person name="Fasulo D."/>
            <person name="Halldorsson B.V."/>
            <person name="Hannenhalli S."/>
            <person name="Turner R."/>
            <person name="Yooseph S."/>
            <person name="Lu F."/>
            <person name="Nusskern D.R."/>
            <person name="Shue B.C."/>
            <person name="Zheng X.H."/>
            <person name="Zhong F."/>
            <person name="Delcher A.L."/>
            <person name="Huson D.H."/>
            <person name="Kravitz S.A."/>
            <person name="Mouchard L."/>
            <person name="Reinert K."/>
            <person name="Remington K.A."/>
            <person name="Clark A.G."/>
            <person name="Waterman M.S."/>
            <person name="Eichler E.E."/>
            <person name="Adams M.D."/>
            <person name="Hunkapiller M.W."/>
            <person name="Myers E.W."/>
            <person name="Venter J.C."/>
        </authorList>
    </citation>
    <scope>NUCLEOTIDE SEQUENCE [LARGE SCALE GENOMIC DNA]</scope>
</reference>
<reference key="5">
    <citation type="journal article" date="2004" name="Genome Res.">
        <title>The status, quality, and expansion of the NIH full-length cDNA project: the Mammalian Gene Collection (MGC).</title>
        <authorList>
            <consortium name="The MGC Project Team"/>
        </authorList>
    </citation>
    <scope>NUCLEOTIDE SEQUENCE [LARGE SCALE MRNA] (ISOFORM 2)</scope>
    <source>
        <tissue>Brain</tissue>
    </source>
</reference>
<reference key="6">
    <citation type="journal article" date="1994" name="J. Immunol.">
        <title>Islet cell antigen 512 is a diabetes-specific islet autoantigen related to protein tyrosine phosphatases.</title>
        <authorList>
            <person name="Rabin D.U."/>
            <person name="Pleasic S.M."/>
            <person name="Shapiro J.A."/>
            <person name="Yoo-Warren H."/>
            <person name="Oles J."/>
            <person name="Hicks J.M."/>
            <person name="Goldstein D.E."/>
            <person name="Rae P.M."/>
        </authorList>
    </citation>
    <scope>PRELIMINARY NUCLEOTIDE SEQUENCE OF 389-789</scope>
    <scope>ROLE IN DIABETES MELLITUS</scope>
    <source>
        <tissue>Pancreatic islet</tissue>
    </source>
</reference>
<reference key="7">
    <citation type="journal article" date="1996" name="EMBO J.">
        <title>ICA 512, an autoantigen of type I diabetes, is an intrinsic membrane protein of neurosecretory granules.</title>
        <authorList>
            <person name="Solimena M."/>
            <person name="Dirkx R. Jr."/>
            <person name="Hermel J.-M."/>
            <person name="Pleasic-Williams S."/>
            <person name="Shapiro J.A."/>
            <person name="Caron L."/>
            <person name="Rabin D.U."/>
        </authorList>
    </citation>
    <scope>SEQUENCE REVISION</scope>
    <scope>ROLE IN DIABETES MELLITUS</scope>
</reference>
<reference key="8">
    <citation type="journal article" date="1999" name="Eur. J. Neurosci.">
        <title>Post-translational modifications of ICA512, a receptor tyrosine phosphatase-like protein of secretory granules.</title>
        <authorList>
            <person name="Hermel J.-M."/>
            <person name="Dirkx R."/>
            <person name="Solimena M."/>
        </authorList>
    </citation>
    <scope>SUBCELLULAR LOCATION</scope>
</reference>
<reference key="9">
    <citation type="journal article" date="2001" name="EMBO J.">
        <title>Dephosphorylation of beta2-syntrophin and Ca2+/mu-calpain-mediated cleavage of ICA512 upon stimulation of insulin secretion.</title>
        <authorList>
            <person name="Ort T."/>
            <person name="Voronov S."/>
            <person name="Guo J."/>
            <person name="Zawalich K."/>
            <person name="Froehner S.C."/>
            <person name="Zawalich W."/>
            <person name="Solimena M."/>
        </authorList>
    </citation>
    <scope>INTERACTION WITH SNTB2</scope>
    <scope>PROTEOLYTIC PROCESSING</scope>
    <scope>PARTIAL PROTEIN SEQUENCE</scope>
</reference>
<reference key="10">
    <citation type="journal article" date="2004" name="J. Cell Biol.">
        <title>Nuclear translocation of an ICA512 cytosolic fragment couples granule exocytosis and insulin expression in {beta}-cells.</title>
        <authorList>
            <person name="Trajkovski M."/>
            <person name="Mziaut H."/>
            <person name="Altkrueger A."/>
            <person name="Ouwendijk J."/>
            <person name="Knoch K.P."/>
            <person name="Mueller S."/>
            <person name="Solimena M."/>
        </authorList>
    </citation>
    <scope>FUNCTION</scope>
    <scope>INTERACTION WITH PIAS4</scope>
    <scope>SUBCELLULAR LOCATION</scope>
    <scope>PROTEOLYTIC CLEAVAGE</scope>
</reference>
<reference key="11">
    <citation type="journal article" date="2005" name="Diabetologia">
        <title>The IA-2 interactome.</title>
        <authorList>
            <person name="Hu Y.F."/>
            <person name="Zhang H.L."/>
            <person name="Cai T."/>
            <person name="Harashima S."/>
            <person name="Notkins A.L."/>
        </authorList>
    </citation>
    <scope>INTERACTION WITH SNX19</scope>
</reference>
<reference key="12">
    <citation type="journal article" date="2006" name="Nat. Cell Biol.">
        <title>Synergy of glucose and growth hormone signalling in islet cells through ICA512 and STAT5.</title>
        <authorList>
            <person name="Mziaut H."/>
            <person name="Trajkovski M."/>
            <person name="Kersting S."/>
            <person name="Ehninger A."/>
            <person name="Altkrueger A."/>
            <person name="Lemaitre R.P."/>
            <person name="Schmidt D."/>
            <person name="Saeger H.D."/>
            <person name="Lee M.S."/>
            <person name="Drechsel D.N."/>
            <person name="Mueller S."/>
            <person name="Solimena M."/>
        </authorList>
    </citation>
    <scope>FUNCTION</scope>
    <scope>INTERACTION WITH STAT5B AND PIAS4</scope>
    <scope>SUMOYLATION AT LYS-754</scope>
</reference>
<reference key="13">
    <citation type="journal article" date="2008" name="J. Biol. Chem.">
        <title>Regulation of insulin granule turnover in pancreatic beta-cells by cleaved ICA512.</title>
        <authorList>
            <person name="Trajkovski M."/>
            <person name="Mziaut H."/>
            <person name="Schubert S."/>
            <person name="Kalaidzidis Y."/>
            <person name="Altkrueger A."/>
            <person name="Solimena M."/>
        </authorList>
    </citation>
    <scope>FUNCTION</scope>
    <scope>SUBUNIT</scope>
</reference>
<reference key="14">
    <citation type="journal article" date="2008" name="Proc. Natl. Acad. Sci. U.S.A.">
        <title>ICA512 signaling enhances pancreatic beta-cell proliferation by regulating cyclins D through STATs.</title>
        <authorList>
            <person name="Mziaut H."/>
            <person name="Kersting S."/>
            <person name="Knoch K.P."/>
            <person name="Fan W.H."/>
            <person name="Trajkovski M."/>
            <person name="Erdmann K."/>
            <person name="Bergert H."/>
            <person name="Ehehalt F."/>
            <person name="Saeger H.D."/>
            <person name="Solimena M."/>
        </authorList>
    </citation>
    <scope>FUNCTION</scope>
</reference>
<reference key="15">
    <citation type="journal article" date="2010" name="PLoS ONE">
        <title>beta2-Syntrophin is a Cdk5 substrate that restrains the motility of insulin secretory granules.</title>
        <authorList>
            <person name="Schubert S."/>
            <person name="Knoch K.P."/>
            <person name="Ouwendijk J."/>
            <person name="Mohammed S."/>
            <person name="Bodrov Y."/>
            <person name="Jaeger M."/>
            <person name="Altkrueger A."/>
            <person name="Wegbrod C."/>
            <person name="Adams M.E."/>
            <person name="Kim Y."/>
            <person name="Froehner S.C."/>
            <person name="Jensen O.N."/>
            <person name="Kalaidzidis Y."/>
            <person name="Solimena M."/>
        </authorList>
    </citation>
    <scope>FUNCTION</scope>
</reference>
<reference key="16">
    <citation type="journal article" date="2012" name="Mol. Cell. Proteomics">
        <title>Human urinary glycoproteomics; attachment site specific analysis of N- and O-linked glycosylations by CID and ECD.</title>
        <authorList>
            <person name="Halim A."/>
            <person name="Nilsson J."/>
            <person name="Ruetschi U."/>
            <person name="Hesse C."/>
            <person name="Larson G."/>
        </authorList>
    </citation>
    <scope>GLYCOSYLATION AT THR-441</scope>
    <scope>STRUCTURE OF CARBOHYDRATES</scope>
    <scope>IDENTIFICATION BY MASS SPECTROMETRY</scope>
</reference>
<reference key="17">
    <citation type="journal article" date="2012" name="J. Diabetes Investig.">
        <title>Sorting nexin 19 regulates the number of dense core vesicles in pancreatic beta-cells.</title>
        <authorList>
            <person name="Harashima S."/>
            <person name="Horiuchi T."/>
            <person name="Wang Y."/>
            <person name="Notkins A.L."/>
            <person name="Seino Y."/>
            <person name="Inagaki N."/>
        </authorList>
    </citation>
    <scope>FUNCTION</scope>
</reference>
<reference key="18">
    <citation type="journal article" date="2013" name="J. Proteome Res.">
        <title>LC-MS/MS characterization of O-glycosylation sites and glycan structures of human cerebrospinal fluid glycoproteins.</title>
        <authorList>
            <person name="Halim A."/>
            <person name="Ruetschi U."/>
            <person name="Larson G."/>
            <person name="Nilsson J."/>
        </authorList>
    </citation>
    <scope>GLYCOSYLATION AT THR-441</scope>
    <scope>IDENTIFICATION BY MASS SPECTROMETRY</scope>
</reference>
<reference key="19">
    <citation type="journal article" date="2015" name="Mol. Cell. Biol.">
        <title>Stability of proICA512/IA-2 and its targeting to insulin secretory granules require beta4-sheet-mediated dimerization of its ectodomain in the endoplasmic reticulum.</title>
        <authorList>
            <person name="Torkko J.M."/>
            <person name="Primo M.E."/>
            <person name="Dirkx R."/>
            <person name="Friedrich A."/>
            <person name="Viehrig A."/>
            <person name="Vergari E."/>
            <person name="Borgonovo B."/>
            <person name="Soenmez A."/>
            <person name="Wegbrod C."/>
            <person name="Lachnit M."/>
            <person name="Muenster C."/>
            <person name="Sica M.P."/>
            <person name="Ermacora M.R."/>
            <person name="Solimena M."/>
        </authorList>
    </citation>
    <scope>SUBUNIT</scope>
    <scope>SUBCELLULAR LOCATION</scope>
    <scope>MUTAGENESIS OF ASN-506; ASN-524 AND GLY-553</scope>
    <scope>GLYCOSYLATION AT ASN-506 AND ASN-524</scope>
</reference>
<reference key="20">
    <citation type="journal article" date="2016" name="Biochim. Biophys. Acta">
        <title>Biochemical, biophysical, and functional properties of ICA512/IA-2 RESP18 homology domain.</title>
        <authorList>
            <person name="Sosa L."/>
            <person name="Torkko J.M."/>
            <person name="Primo M.E."/>
            <person name="Llovera R.E."/>
            <person name="Toledo P.L."/>
            <person name="Rios A.S."/>
            <person name="Flecha F.L."/>
            <person name="Trabucchi A."/>
            <person name="Valdez S.N."/>
            <person name="Poskus E."/>
            <person name="Solimena M."/>
            <person name="Ermacora M.R."/>
        </authorList>
    </citation>
    <scope>SUBUNIT</scope>
    <scope>INTERACTION WITH INSULIN</scope>
    <scope>DISULFIDE BONDS</scope>
</reference>
<reference key="21">
    <citation type="journal article" date="2007" name="J. Struct. Funct. Genomics">
        <title>Structural genomics of protein phosphatases.</title>
        <authorList>
            <person name="Almo S.C."/>
            <person name="Bonanno J.B."/>
            <person name="Sauder J.M."/>
            <person name="Emtage S."/>
            <person name="Dilorenzo T.P."/>
            <person name="Malashkevich V."/>
            <person name="Wasserman S.R."/>
            <person name="Swaminathan S."/>
            <person name="Eswaramoorthy S."/>
            <person name="Agarwal R."/>
            <person name="Kumaran D."/>
            <person name="Madegowda M."/>
            <person name="Ragumani S."/>
            <person name="Patskovsky Y."/>
            <person name="Alvarado J."/>
            <person name="Ramagopal U.A."/>
            <person name="Faber-Barata J."/>
            <person name="Chance M.R."/>
            <person name="Sali A."/>
            <person name="Fiser A."/>
            <person name="Zhang Z.Y."/>
            <person name="Lawrence D.S."/>
            <person name="Burley S.K."/>
        </authorList>
    </citation>
    <scope>X-RAY CRYSTALLOGRAPHY (2.23 ANGSTROMS) OF 681-979</scope>
</reference>
<reference key="22">
    <citation type="journal article" date="2008" name="J. Biol. Chem.">
        <title>Structure of the mature ectodomain of the human receptor-type protein-tyrosine phosphatase IA-2.</title>
        <authorList>
            <person name="Primo M.E."/>
            <person name="Klinke S."/>
            <person name="Sica M.P."/>
            <person name="Goldbaum F.A."/>
            <person name="Jakoncic J."/>
            <person name="Poskus E."/>
            <person name="Ermacora M.R."/>
        </authorList>
    </citation>
    <scope>X-RAY CRYSTALLOGRAPHY (1.3 ANGSTROMS) OF 468-558</scope>
</reference>
<accession>Q16849</accession>
<accession>B4DK12</accession>
<accession>F5GZS3</accession>
<accession>Q08319</accession>
<accession>Q53QD6</accession>
<accession>Q6NSL1</accession>
<evidence type="ECO:0000250" key="1"/>
<evidence type="ECO:0000250" key="2">
    <source>
        <dbReference type="UniProtKB" id="P56722"/>
    </source>
</evidence>
<evidence type="ECO:0000250" key="3">
    <source>
        <dbReference type="UniProtKB" id="P80560"/>
    </source>
</evidence>
<evidence type="ECO:0000250" key="4">
    <source>
        <dbReference type="UniProtKB" id="Q60673"/>
    </source>
</evidence>
<evidence type="ECO:0000250" key="5">
    <source>
        <dbReference type="UniProtKB" id="Q63259"/>
    </source>
</evidence>
<evidence type="ECO:0000255" key="6"/>
<evidence type="ECO:0000255" key="7">
    <source>
        <dbReference type="PROSITE-ProRule" id="PRU00160"/>
    </source>
</evidence>
<evidence type="ECO:0000256" key="8">
    <source>
        <dbReference type="SAM" id="MobiDB-lite"/>
    </source>
</evidence>
<evidence type="ECO:0000269" key="9">
    <source>
    </source>
</evidence>
<evidence type="ECO:0000269" key="10">
    <source>
    </source>
</evidence>
<evidence type="ECO:0000269" key="11">
    <source>
    </source>
</evidence>
<evidence type="ECO:0000269" key="12">
    <source>
    </source>
</evidence>
<evidence type="ECO:0000269" key="13">
    <source>
    </source>
</evidence>
<evidence type="ECO:0000269" key="14">
    <source>
    </source>
</evidence>
<evidence type="ECO:0000269" key="15">
    <source>
    </source>
</evidence>
<evidence type="ECO:0000269" key="16">
    <source>
    </source>
</evidence>
<evidence type="ECO:0000269" key="17">
    <source>
    </source>
</evidence>
<evidence type="ECO:0000269" key="18">
    <source>
    </source>
</evidence>
<evidence type="ECO:0000269" key="19">
    <source>
    </source>
</evidence>
<evidence type="ECO:0000269" key="20">
    <source>
    </source>
</evidence>
<evidence type="ECO:0000269" key="21">
    <source>
    </source>
</evidence>
<evidence type="ECO:0000269" key="22">
    <source>
    </source>
</evidence>
<evidence type="ECO:0000269" key="23">
    <source>
    </source>
</evidence>
<evidence type="ECO:0000269" key="24">
    <source>
    </source>
</evidence>
<evidence type="ECO:0000303" key="25">
    <source>
    </source>
</evidence>
<evidence type="ECO:0000303" key="26">
    <source>
    </source>
</evidence>
<evidence type="ECO:0000303" key="27">
    <source>
    </source>
</evidence>
<evidence type="ECO:0000303" key="28">
    <source>
    </source>
</evidence>
<evidence type="ECO:0000305" key="29"/>
<evidence type="ECO:0000305" key="30">
    <source>
    </source>
</evidence>
<evidence type="ECO:0000305" key="31">
    <source>
    </source>
</evidence>
<evidence type="ECO:0000305" key="32">
    <source>
    </source>
</evidence>
<evidence type="ECO:0007829" key="33">
    <source>
        <dbReference type="PDB" id="2I1Y"/>
    </source>
</evidence>
<evidence type="ECO:0007829" key="34">
    <source>
        <dbReference type="PDB" id="2QT7"/>
    </source>
</evidence>
<sequence>MRRPRRPGGLGGSGGLRLLLCLLLLSSRPGGCSAVSAHGCLFDRRLCSHLEVCIQDGLFGQCQVGVGQARPLLQVTSPVLQRLQGVLRQLMSQGLSWHDDLTQYVISQEMERIPRLRPPEPRPRDRSGLAPKRPGPAGELLLQDIPTGSAPAAQHRLPQPPVGKGGAGASSSLSPLQAELLPPLLEHLLLPPQPPHPSLSYEPALLQPYLFHQFGSRDGSRVSEGSPGMVSVGPLPKAEAPALFSRTASKGIFGDHPGHSYGDLPGPSPAQLFQDSGLLYLAQELPAPSRARVPRLPEQGSSSRAEDSPEGYEKEGLGDRGEKPASPAVQPDAALQRLAAVLAGYGVELRQLTPEQLSTLLTLLQLLPKGAGRNPGGVVNVGADIKKTMEGPVEGRDTAELPARTSPMPGHPTASPTSSEVQQVPSPVSSEPPKAARPPVTPVLLEKKSPLGQSQPTVAGQPSARPAAEEYGYIVTDQKPLSLAAGVKLLEILAEHVHMSSGSFINISVVGPALTFRIRHNEQNLSLADVTQQAGLVKSELEAQTGLQILQTGVGQREEAAAVLPQTAHSTSPMRSVLLTLVALAGVAGLLVALAVALCVRQHARQQDKERLAALGPEGAHGDTTFEYQDLCRQHMATKSLFNRAEGPPEPSRVSSVSSQFSDAAQASPSSHSSTPSWCEEPAQANMDISTGHMILAYMEDHLRNRDRLAKEWQALCAYQAEPNTCATAQGEGNIKKNRHPDFLPYDHARIKLKVESSPSRSDYINASPIIEHDPRMPAYIATQGPLSHTIADFWQMVWESGCTVIVMLTPLVEDGVKQCDRYWPDEGASLYHVYEVNLVSEHIWCEDFLVRSFYLKNVQTQETRTLTQFHFLSWPAEGTPASTRPLLDFRRKVNKCYRGRSCPIIVHCSDGAGRTGTYILIDMVLNRMAKGVKEIDIAATLEHVRDQRPGLVRSKDQFEFALTAVAEEVNAILKALPQ</sequence>
<comment type="function">
    <text evidence="4 19">Plays a role in vesicle-mediated secretory processes (PubMed:24843546). Required for normal accumulation of secretory vesicles in hippocampus, pituitary and pancreatic islets (By similarity). Required for the accumulation of normal levels of insulin-containing vesicles and preventing their degradation (PubMed:24843546). Plays a role in insulin secretion in response to glucose stimuli (PubMed:24843546). Required for normal accumulation of the neurotransmitters norepinephrine, dopamine and serotonin in the brain (By similarity). In females, but not in males, required for normal accumulation and secretion of pituitary hormones, such as luteinizing hormone (LH) and follicle-stimulating hormone (FSH) (By similarity). Required to maintain normal levels of renin expression and renin release (By similarity). Seems to lack intrinsic enzyme activity (By similarity). May regulate catalytic active protein-tyrosine phosphatases such as PTPRA through dimerization (By similarity).</text>
</comment>
<comment type="function">
    <molecule>ICA512-transmembrane fragment</molecule>
    <text evidence="15 16">ICA512-TMF regulates dynamics and exocytosis of insulin secretory granules (SGs); binding of ICA512-TMF to SNTB2/beta-2-syntrophin is proposed to restrain SGs mobility and exocytosis by tethering them to the actin cytoskeleton depending on UTRN; the function is inhibited by cytoplasmic ICA512-CFF dimerizing with ICA512-TMF and displacing SNTB2.</text>
</comment>
<comment type="function">
    <molecule>ICA512-cleaved cytosolic fragment</molecule>
    <text evidence="11 13 14 15 16">ICA512-CCF translocated to the nucleus promotes expression of insulin and other granule-related genes; the function implicates binding to and regulating activity of STAT5B probably by preventing its dephosphorylation and potentially by inducing its sumoylation by recruiting PIAS4 (PubMed:15596545, PubMed:16622421, PubMed:18178618). Enhances pancreatic beta-cell proliferation by converging with signaling by STAT5B and STAT3 (PubMed:15596545, PubMed:16622421, PubMed:18178618). ICA512-CCF located in the cytoplasm regulates dynamics and exocytosis of insulin secretory granules (SGs) by dimerizing with ICA512-TMF and displacing SNTB2 thus enhancing SGs mobility and exocytosis (PubMed:18824546, PubMed:20886068).</text>
</comment>
<comment type="subunit">
    <text evidence="4 10 11 12 13 15 20 21">Homodimer; shown for the unprocessed protein (proICA512) in the endoplasmic reticulum and resolved during protein maturation as ICA512-TMF seems to be predominantly monomeric in secretory granules; however, ICA512-CCF interacts with ICA512-TMF disrupting the ICA512-TMF:SNTB2 complex. The isolated lumenal RESP18 homology domain has been shown to form disulfide-linked homooligomers (PubMed:18824546, PubMed:25561468, PubMed:26836020). Interacts (via cytoplasmic domain) with phosphorylated SNTB2; this protects PTPRN against cleavage by CAPN1 to produce ICA512-CCF. Dephosphorylation of SNTB2 upon insulin stimulation disrupts the interaction and results in PTPRN cleavage (PubMed:11483505). Interacts with SNX19 (PubMed:16273344). ICA512-CCF interacts with PIAS4; in the nucleus (PubMed:15596545). Interacts with STAT5B (phosphorylated); down-regulated by ICA512-CCF sumoylation; ICA512-CCF prevents STAT5B dephosphorylation; ICA512-CCF mediates interaction of STAT5B with PIAS4 (PubMed:15596545, PubMed:16622421). Interacts (via RESP18 homology domain) with insulin and proinsulin (PubMed:26836020). Interacts with PTPRN2, PTPRA and PTPRE (By similarity).</text>
</comment>
<comment type="interaction">
    <interactant intactId="EBI-728153">
        <id>Q16849</id>
    </interactant>
    <interactant intactId="EBI-310528">
        <id>Q8WXG6</id>
        <label>MADD</label>
    </interactant>
    <organismsDiffer>false</organismsDiffer>
    <experiments>4</experiments>
</comment>
<comment type="interaction">
    <interactant intactId="EBI-728153">
        <id>Q16849</id>
    </interactant>
    <interactant intactId="EBI-2828127">
        <id>Q13093</id>
        <label>PLA2G7</label>
    </interactant>
    <organismsDiffer>false</organismsDiffer>
    <experiments>2</experiments>
</comment>
<comment type="interaction">
    <interactant intactId="EBI-728153">
        <id>Q16849</id>
    </interactant>
    <interactant intactId="EBI-437708">
        <id>P62937</id>
        <label>PPIA</label>
    </interactant>
    <organismsDiffer>false</organismsDiffer>
    <experiments>3</experiments>
</comment>
<comment type="interaction">
    <interactant intactId="EBI-728153">
        <id>Q16849</id>
    </interactant>
    <interactant intactId="EBI-711536">
        <id>Q13332</id>
        <label>PTPRS</label>
    </interactant>
    <organismsDiffer>false</organismsDiffer>
    <experiments>5</experiments>
</comment>
<comment type="interaction">
    <interactant intactId="EBI-728153">
        <id>Q16849</id>
    </interactant>
    <interactant intactId="EBI-728180">
        <id>O14522</id>
        <label>PTPRT</label>
    </interactant>
    <organismsDiffer>false</organismsDiffer>
    <experiments>3</experiments>
</comment>
<comment type="interaction">
    <interactant intactId="EBI-728153">
        <id>Q16849</id>
    </interactant>
    <interactant intactId="EBI-728232">
        <id>Q92543</id>
        <label>SNX19</label>
    </interactant>
    <organismsDiffer>false</organismsDiffer>
    <experiments>4</experiments>
</comment>
<comment type="interaction">
    <interactant intactId="EBI-728153">
        <id>Q16849</id>
    </interactant>
    <interactant intactId="EBI-308543">
        <id>Q9H254</id>
        <label>SPTBN4</label>
    </interactant>
    <organismsDiffer>false</organismsDiffer>
    <experiments>2</experiments>
</comment>
<comment type="interaction">
    <interactant intactId="EBI-10200782">
        <id>Q16849-3</id>
    </interactant>
    <interactant intactId="EBI-953766">
        <id>Q9H6E4</id>
        <label>CCDC134</label>
    </interactant>
    <organismsDiffer>false</organismsDiffer>
    <experiments>3</experiments>
</comment>
<comment type="interaction">
    <interactant intactId="EBI-10200782">
        <id>Q16849-3</id>
    </interactant>
    <interactant intactId="EBI-17458373">
        <id>P48165</id>
        <label>GJA8</label>
    </interactant>
    <organismsDiffer>false</organismsDiffer>
    <experiments>3</experiments>
</comment>
<comment type="interaction">
    <interactant intactId="EBI-10200782">
        <id>Q16849-3</id>
    </interactant>
    <interactant intactId="EBI-13345167">
        <id>Q8TDT2</id>
        <label>GPR152</label>
    </interactant>
    <organismsDiffer>false</organismsDiffer>
    <experiments>3</experiments>
</comment>
<comment type="interaction">
    <interactant intactId="EBI-10200782">
        <id>Q16849-3</id>
    </interactant>
    <interactant intactId="EBI-3932027">
        <id>P21145</id>
        <label>MAL</label>
    </interactant>
    <organismsDiffer>false</organismsDiffer>
    <experiments>3</experiments>
</comment>
<comment type="interaction">
    <interactant intactId="EBI-10200782">
        <id>Q16849-3</id>
    </interactant>
    <interactant intactId="EBI-8653150">
        <id>P60201</id>
        <label>PLP1</label>
    </interactant>
    <organismsDiffer>false</organismsDiffer>
    <experiments>3</experiments>
</comment>
<comment type="interaction">
    <interactant intactId="EBI-10200782">
        <id>Q16849-3</id>
    </interactant>
    <interactant intactId="EBI-12188331">
        <id>P60201-2</id>
        <label>PLP1</label>
    </interactant>
    <organismsDiffer>false</organismsDiffer>
    <experiments>9</experiments>
</comment>
<comment type="interaction">
    <interactant intactId="EBI-10200782">
        <id>Q16849-3</id>
    </interactant>
    <interactant intactId="EBI-6268651">
        <id>Q9NPL8</id>
        <label>TIMMDC1</label>
    </interactant>
    <organismsDiffer>false</organismsDiffer>
    <experiments>3</experiments>
</comment>
<comment type="interaction">
    <interactant intactId="EBI-10200782">
        <id>Q16849-3</id>
    </interactant>
    <interactant intactId="EBI-11742770">
        <id>Q96HE8</id>
        <label>TMEM80</label>
    </interactant>
    <organismsDiffer>false</organismsDiffer>
    <experiments>3</experiments>
</comment>
<comment type="interaction">
    <interactant intactId="EBI-10200782">
        <id>Q16849-3</id>
    </interactant>
    <interactant intactId="EBI-17257686">
        <id>Q13061-2</id>
        <label>TRDN</label>
    </interactant>
    <organismsDiffer>false</organismsDiffer>
    <experiments>3</experiments>
</comment>
<comment type="subcellular location">
    <subcellularLocation>
        <location evidence="5">Membrane</location>
        <topology evidence="5">Single-pass type I membrane protein</topology>
    </subcellularLocation>
    <subcellularLocation>
        <location evidence="31">Cytoplasmic vesicle</location>
        <location evidence="31">Secretory vesicle membrane</location>
        <topology evidence="29">Single-pass type I membrane protein</topology>
    </subcellularLocation>
    <subcellularLocation>
        <location evidence="5">Perikaryon</location>
    </subcellularLocation>
    <subcellularLocation>
        <location evidence="5">Cell projection</location>
        <location evidence="5">Axon</location>
    </subcellularLocation>
    <subcellularLocation>
        <location evidence="5">Synapse</location>
    </subcellularLocation>
    <subcellularLocation>
        <location evidence="9">Cell membrane</location>
        <topology evidence="5">Single-pass type I membrane protein</topology>
    </subcellularLocation>
    <subcellularLocation>
        <location evidence="5">Endosome</location>
    </subcellularLocation>
    <text evidence="5 20">Detected on neuronal secretory vesicles, but not on synaptic vesicles. Colocalizes with insulin-containing secretory granules (PubMed:25561468). Primarily detected on secretory vesicle membranes. Transiently found at the cell membrane, when secretory vesicles fuse with the cell membrane to release their cargo. Is then endocytosed and recycled to secretory vesicles via the Golgi apparatus membranes.</text>
</comment>
<comment type="subcellular location">
    <molecule>ICA512-transmembrane fragment</molecule>
    <subcellularLocation>
        <location evidence="5">Cytoplasmic vesicle</location>
        <location evidence="5">Secretory vesicle membrane</location>
    </subcellularLocation>
</comment>
<comment type="subcellular location">
    <molecule>ICA512-cleaved cytosolic fragment</molecule>
    <subcellularLocation>
        <location evidence="11">Nucleus</location>
    </subcellularLocation>
</comment>
<comment type="alternative products">
    <event type="alternative splicing"/>
    <isoform>
        <id>Q16849-1</id>
        <name>1</name>
        <sequence type="displayed"/>
    </isoform>
    <isoform>
        <id>Q16849-2</id>
        <name>2</name>
        <sequence type="described" ref="VSP_043654"/>
    </isoform>
    <isoform>
        <id>Q16849-3</id>
        <name>3</name>
        <sequence type="described" ref="VSP_045867"/>
    </isoform>
</comment>
<comment type="tissue specificity">
    <text evidence="22">Expression is restricted to neuroendocrine cells. Found in pancreas, brain and pituitary.</text>
</comment>
<comment type="domain">
    <text evidence="20">The RESP18 homology domain is sufficient for targeting proICA512 to secretory granules.</text>
</comment>
<comment type="PTM">
    <text evidence="20">N-glycosylated.</text>
</comment>
<comment type="PTM">
    <text evidence="17 18 20">O-glycosylated with core 1 or possibly core 8 glycans.</text>
</comment>
<comment type="PTM">
    <text evidence="2 5 10 30">Subject to proteolytic cleavage at multiple sites (PubMed:11483505). Subject to cleavage on a pair of basic residues (By similarity). On exocytosis of secretory granules in pancreatic beta-cells ICA512-TMF is transiently inserted in the plasma-membrane and cleaved by mu-type calpain CPN1 to yield ICA512-CCF (By similarity).</text>
</comment>
<comment type="PTM">
    <text evidence="13">Sumoylated at two sites including Lys-754. Sumoylation decreases interaction with STAT5.</text>
</comment>
<comment type="disease">
    <text evidence="23 24">Autoantigen in insulin-dependent diabetes mellitus (IDDM).</text>
</comment>
<comment type="similarity">
    <text evidence="29">Belongs to the protein-tyrosine phosphatase family. Receptor class 8 subfamily.</text>
</comment>
<comment type="caution">
    <text evidence="29">Does not possess catalytic activity due to replacement of highly conserved residues in tyrosine-protein phosphatase domain.</text>
</comment>
<name>PTPRN_HUMAN</name>
<protein>
    <recommendedName>
        <fullName>Receptor-type tyrosine-protein phosphatase-like N</fullName>
        <shortName>R-PTP-N</shortName>
    </recommendedName>
    <alternativeName>
        <fullName evidence="27">Islet cell antigen 512</fullName>
        <shortName evidence="28">ICA 512</shortName>
    </alternativeName>
    <alternativeName>
        <fullName>Islet cell autoantigen 3</fullName>
    </alternativeName>
    <alternativeName>
        <fullName>PTP IA-2</fullName>
    </alternativeName>
    <component>
        <recommendedName>
            <fullName>ICA512-N-terminal fragment</fullName>
            <shortName>ICA512-NTF</shortName>
        </recommendedName>
    </component>
    <component>
        <recommendedName>
            <fullName>ICA512-transmembrane fragment</fullName>
            <shortName>ICA512-TMF</shortName>
        </recommendedName>
    </component>
    <component>
        <recommendedName>
            <fullName>ICA512-cleaved cytosolic fragment</fullName>
            <shortName>ICA512-CCF</shortName>
        </recommendedName>
    </component>
</protein>
<feature type="signal peptide" evidence="1">
    <location>
        <begin position="1"/>
        <end position="34"/>
    </location>
</feature>
<feature type="chain" id="PRO_0000025451" description="Receptor-type tyrosine-protein phosphatase-like N">
    <location>
        <begin position="35"/>
        <end position="979"/>
    </location>
</feature>
<feature type="chain" id="PRO_0000438079" description="ICA512-N-terminal fragment" evidence="2 32">
    <location>
        <begin position="35"/>
        <end position="448"/>
    </location>
</feature>
<feature type="chain" id="PRO_0000438080" description="ICA512-transmembrane fragment" evidence="2 32">
    <location>
        <begin position="449"/>
        <end position="979"/>
    </location>
</feature>
<feature type="chain" id="PRO_0000438081" description="ICA512-cleaved cytosolic fragment" evidence="30 32">
    <location>
        <begin position="659"/>
        <end position="979"/>
    </location>
</feature>
<feature type="topological domain" description="Lumenal" evidence="6">
    <location>
        <begin position="35"/>
        <end position="575"/>
    </location>
</feature>
<feature type="transmembrane region" description="Helical" evidence="6">
    <location>
        <begin position="576"/>
        <end position="600"/>
    </location>
</feature>
<feature type="topological domain" description="Cytoplasmic" evidence="6">
    <location>
        <begin position="601"/>
        <end position="979"/>
    </location>
</feature>
<feature type="domain" description="Tyrosine-protein phosphatase" evidence="7">
    <location>
        <begin position="709"/>
        <end position="969"/>
    </location>
</feature>
<feature type="region of interest" description="RESP18 homology domain">
    <location>
        <begin position="35"/>
        <end position="131"/>
    </location>
</feature>
<feature type="region of interest" description="Disordered" evidence="8">
    <location>
        <begin position="112"/>
        <end position="173"/>
    </location>
</feature>
<feature type="region of interest" description="Disordered" evidence="8">
    <location>
        <begin position="289"/>
        <end position="329"/>
    </location>
</feature>
<feature type="region of interest" description="Disordered" evidence="8">
    <location>
        <begin position="393"/>
        <end position="439"/>
    </location>
</feature>
<feature type="region of interest" description="Sufficient for dimerization of proICA512" evidence="20">
    <location>
        <begin position="449"/>
        <end position="575"/>
    </location>
</feature>
<feature type="region of interest" description="Sufficient for dimerization of proICA512" evidence="3">
    <location>
        <begin position="601"/>
        <end position="732"/>
    </location>
</feature>
<feature type="region of interest" description="Disordered" evidence="8">
    <location>
        <begin position="643"/>
        <end position="680"/>
    </location>
</feature>
<feature type="compositionally biased region" description="Basic and acidic residues" evidence="8">
    <location>
        <begin position="112"/>
        <end position="127"/>
    </location>
</feature>
<feature type="compositionally biased region" description="Basic and acidic residues" evidence="8">
    <location>
        <begin position="304"/>
        <end position="323"/>
    </location>
</feature>
<feature type="compositionally biased region" description="Low complexity" evidence="8">
    <location>
        <begin position="415"/>
        <end position="433"/>
    </location>
</feature>
<feature type="compositionally biased region" description="Low complexity" evidence="8">
    <location>
        <begin position="652"/>
        <end position="677"/>
    </location>
</feature>
<feature type="site" description="Cleavage" evidence="2">
    <location>
        <begin position="448"/>
        <end position="449"/>
    </location>
</feature>
<feature type="modified residue" description="Phosphoserine" evidence="4">
    <location>
        <position position="308"/>
    </location>
</feature>
<feature type="glycosylation site" description="O-linked (GalNAc...) threonine" evidence="17 18">
    <location>
        <position position="441"/>
    </location>
</feature>
<feature type="glycosylation site" description="N-linked (GlcNAc...) asparagine" evidence="6 20">
    <location>
        <position position="506"/>
    </location>
</feature>
<feature type="glycosylation site" description="N-linked (GlcNAc...) asparagine" evidence="6 20">
    <location>
        <position position="524"/>
    </location>
</feature>
<feature type="disulfide bond" description="Interchain (with C-40 or C-47); in multimeric form" evidence="32">
    <location>
        <position position="40"/>
    </location>
</feature>
<feature type="disulfide bond" description="Interchain (with C-40 or C-47); in multimeric form" evidence="32">
    <location>
        <position position="47"/>
    </location>
</feature>
<feature type="disulfide bond" evidence="32">
    <location>
        <begin position="53"/>
        <end position="62"/>
    </location>
</feature>
<feature type="cross-link" description="Glycyl lysine isopeptide (Lys-Gly) (interchain with G-Cter in SUMO)" evidence="13">
    <location>
        <position position="754"/>
    </location>
</feature>
<feature type="splice variant" id="VSP_045867" description="In isoform 3." evidence="25">
    <location>
        <begin position="1"/>
        <end position="90"/>
    </location>
</feature>
<feature type="splice variant" id="VSP_043654" description="In isoform 2." evidence="26">
    <original>KPLSLAAGVKLLEILAEHVHMSSGSFINIS</original>
    <variation>N</variation>
    <location>
        <begin position="479"/>
        <end position="508"/>
    </location>
</feature>
<feature type="sequence variant" id="VAR_051762" description="In dbSNP:rs35314717.">
    <original>S</original>
    <variation>R</variation>
    <location>
        <position position="419"/>
    </location>
</feature>
<feature type="mutagenesis site" description="Reduces N-glycosylation." evidence="20">
    <original>N</original>
    <variation>A</variation>
    <location>
        <position position="506"/>
    </location>
</feature>
<feature type="mutagenesis site" description="Reduces N-glycosylation." evidence="20">
    <original>N</original>
    <variation>A</variation>
    <location>
        <position position="524"/>
    </location>
</feature>
<feature type="mutagenesis site" description="Impairs normal processing and leads to retention in the endoplasmic reticulum and degradation." evidence="20">
    <original>G</original>
    <variation>D</variation>
    <location>
        <position position="553"/>
    </location>
</feature>
<feature type="sequence conflict" description="In Ref. 2; BAG59024." evidence="29" ref="2">
    <original>S</original>
    <variation>G</variation>
    <location>
        <position position="673"/>
    </location>
</feature>
<feature type="strand" evidence="34">
    <location>
        <begin position="471"/>
        <end position="477"/>
    </location>
</feature>
<feature type="helix" evidence="34">
    <location>
        <begin position="483"/>
        <end position="497"/>
    </location>
</feature>
<feature type="helix" evidence="34">
    <location>
        <begin position="501"/>
        <end position="503"/>
    </location>
</feature>
<feature type="strand" evidence="34">
    <location>
        <begin position="504"/>
        <end position="510"/>
    </location>
</feature>
<feature type="strand" evidence="34">
    <location>
        <begin position="513"/>
        <end position="518"/>
    </location>
</feature>
<feature type="helix" evidence="34">
    <location>
        <begin position="527"/>
        <end position="536"/>
    </location>
</feature>
<feature type="helix" evidence="34">
    <location>
        <begin position="538"/>
        <end position="545"/>
    </location>
</feature>
<feature type="strand" evidence="34">
    <location>
        <begin position="549"/>
        <end position="555"/>
    </location>
</feature>
<feature type="helix" evidence="33">
    <location>
        <begin position="692"/>
        <end position="704"/>
    </location>
</feature>
<feature type="helix" evidence="33">
    <location>
        <begin position="706"/>
        <end position="717"/>
    </location>
</feature>
<feature type="helix" evidence="33">
    <location>
        <begin position="727"/>
        <end position="730"/>
    </location>
</feature>
<feature type="turn" evidence="33">
    <location>
        <begin position="732"/>
        <end position="734"/>
    </location>
</feature>
<feature type="helix" evidence="33">
    <location>
        <begin position="735"/>
        <end position="737"/>
    </location>
</feature>
<feature type="helix" evidence="33">
    <location>
        <begin position="755"/>
        <end position="757"/>
    </location>
</feature>
<feature type="strand" evidence="33">
    <location>
        <begin position="766"/>
        <end position="770"/>
    </location>
</feature>
<feature type="strand" evidence="33">
    <location>
        <begin position="780"/>
        <end position="783"/>
    </location>
</feature>
<feature type="helix" evidence="33">
    <location>
        <begin position="788"/>
        <end position="790"/>
    </location>
</feature>
<feature type="helix" evidence="33">
    <location>
        <begin position="791"/>
        <end position="801"/>
    </location>
</feature>
<feature type="strand" evidence="33">
    <location>
        <begin position="805"/>
        <end position="808"/>
    </location>
</feature>
<feature type="strand" evidence="33">
    <location>
        <begin position="812"/>
        <end position="814"/>
    </location>
</feature>
<feature type="strand" evidence="33">
    <location>
        <begin position="826"/>
        <end position="832"/>
    </location>
</feature>
<feature type="strand" evidence="33">
    <location>
        <begin position="835"/>
        <end position="844"/>
    </location>
</feature>
<feature type="strand" evidence="33">
    <location>
        <begin position="846"/>
        <end position="858"/>
    </location>
</feature>
<feature type="turn" evidence="33">
    <location>
        <begin position="859"/>
        <end position="861"/>
    </location>
</feature>
<feature type="strand" evidence="33">
    <location>
        <begin position="864"/>
        <end position="872"/>
    </location>
</feature>
<feature type="strand" evidence="33">
    <location>
        <begin position="877"/>
        <end position="880"/>
    </location>
</feature>
<feature type="helix" evidence="33">
    <location>
        <begin position="885"/>
        <end position="896"/>
    </location>
</feature>
<feature type="strand" evidence="33">
    <location>
        <begin position="905"/>
        <end position="908"/>
    </location>
</feature>
<feature type="strand" evidence="33">
    <location>
        <begin position="910"/>
        <end position="913"/>
    </location>
</feature>
<feature type="helix" evidence="33">
    <location>
        <begin position="914"/>
        <end position="930"/>
    </location>
</feature>
<feature type="helix" evidence="33">
    <location>
        <begin position="938"/>
        <end position="946"/>
    </location>
</feature>
<feature type="helix" evidence="33">
    <location>
        <begin position="956"/>
        <end position="975"/>
    </location>
</feature>